<proteinExistence type="inferred from homology"/>
<comment type="function">
    <text evidence="1">Probably acts as an electrical shunt for an outwardly-directed proton pump that is linked to amino acid decarboxylation, as part of the extreme acid resistance (XAR) response.</text>
</comment>
<comment type="subcellular location">
    <subcellularLocation>
        <location evidence="1">Cell inner membrane</location>
        <topology evidence="1">Multi-pass membrane protein</topology>
    </subcellularLocation>
</comment>
<comment type="similarity">
    <text evidence="1">Belongs to the chloride channel (TC 2.A.49) family. ClcB subfamily.</text>
</comment>
<reference key="1">
    <citation type="journal article" date="2009" name="PLoS Genet.">
        <title>Organised genome dynamics in the Escherichia coli species results in highly diverse adaptive paths.</title>
        <authorList>
            <person name="Touchon M."/>
            <person name="Hoede C."/>
            <person name="Tenaillon O."/>
            <person name="Barbe V."/>
            <person name="Baeriswyl S."/>
            <person name="Bidet P."/>
            <person name="Bingen E."/>
            <person name="Bonacorsi S."/>
            <person name="Bouchier C."/>
            <person name="Bouvet O."/>
            <person name="Calteau A."/>
            <person name="Chiapello H."/>
            <person name="Clermont O."/>
            <person name="Cruveiller S."/>
            <person name="Danchin A."/>
            <person name="Diard M."/>
            <person name="Dossat C."/>
            <person name="Karoui M.E."/>
            <person name="Frapy E."/>
            <person name="Garry L."/>
            <person name="Ghigo J.M."/>
            <person name="Gilles A.M."/>
            <person name="Johnson J."/>
            <person name="Le Bouguenec C."/>
            <person name="Lescat M."/>
            <person name="Mangenot S."/>
            <person name="Martinez-Jehanne V."/>
            <person name="Matic I."/>
            <person name="Nassif X."/>
            <person name="Oztas S."/>
            <person name="Petit M.A."/>
            <person name="Pichon C."/>
            <person name="Rouy Z."/>
            <person name="Ruf C.S."/>
            <person name="Schneider D."/>
            <person name="Tourret J."/>
            <person name="Vacherie B."/>
            <person name="Vallenet D."/>
            <person name="Medigue C."/>
            <person name="Rocha E.P.C."/>
            <person name="Denamur E."/>
        </authorList>
    </citation>
    <scope>NUCLEOTIDE SEQUENCE [LARGE SCALE GENOMIC DNA]</scope>
    <source>
        <strain>UMN026 / ExPEC</strain>
    </source>
</reference>
<accession>B7NB42</accession>
<protein>
    <recommendedName>
        <fullName evidence="1">Voltage-gated ClC-type chloride channel ClcB</fullName>
    </recommendedName>
</protein>
<name>CLCB_ECOLU</name>
<keyword id="KW-0997">Cell inner membrane</keyword>
<keyword id="KW-1003">Cell membrane</keyword>
<keyword id="KW-0868">Chloride</keyword>
<keyword id="KW-0869">Chloride channel</keyword>
<keyword id="KW-0407">Ion channel</keyword>
<keyword id="KW-0406">Ion transport</keyword>
<keyword id="KW-0472">Membrane</keyword>
<keyword id="KW-0812">Transmembrane</keyword>
<keyword id="KW-1133">Transmembrane helix</keyword>
<keyword id="KW-0813">Transport</keyword>
<keyword id="KW-0851">Voltage-gated channel</keyword>
<dbReference type="EMBL" id="CU928163">
    <property type="protein sequence ID" value="CAR13076.1"/>
    <property type="molecule type" value="Genomic_DNA"/>
</dbReference>
<dbReference type="RefSeq" id="YP_002412610.1">
    <property type="nucleotide sequence ID" value="NC_011751.1"/>
</dbReference>
<dbReference type="SMR" id="B7NB42"/>
<dbReference type="STRING" id="585056.ECUMN_1877"/>
<dbReference type="KEGG" id="eum:ECUMN_1877"/>
<dbReference type="PATRIC" id="fig|585056.7.peg.2064"/>
<dbReference type="HOGENOM" id="CLU_015263_5_2_6"/>
<dbReference type="Proteomes" id="UP000007097">
    <property type="component" value="Chromosome"/>
</dbReference>
<dbReference type="GO" id="GO:0034707">
    <property type="term" value="C:chloride channel complex"/>
    <property type="evidence" value="ECO:0007669"/>
    <property type="project" value="UniProtKB-KW"/>
</dbReference>
<dbReference type="GO" id="GO:0005886">
    <property type="term" value="C:plasma membrane"/>
    <property type="evidence" value="ECO:0007669"/>
    <property type="project" value="UniProtKB-SubCell"/>
</dbReference>
<dbReference type="GO" id="GO:0005247">
    <property type="term" value="F:voltage-gated chloride channel activity"/>
    <property type="evidence" value="ECO:0007669"/>
    <property type="project" value="UniProtKB-UniRule"/>
</dbReference>
<dbReference type="GO" id="GO:0010447">
    <property type="term" value="P:response to acidic pH"/>
    <property type="evidence" value="ECO:0007669"/>
    <property type="project" value="InterPro"/>
</dbReference>
<dbReference type="CDD" id="cd00400">
    <property type="entry name" value="Voltage_gated_ClC"/>
    <property type="match status" value="1"/>
</dbReference>
<dbReference type="FunFam" id="1.10.3080.10:FF:000010">
    <property type="entry name" value="Voltage-gated ClC-type chloride channel ClcB"/>
    <property type="match status" value="1"/>
</dbReference>
<dbReference type="Gene3D" id="1.10.3080.10">
    <property type="entry name" value="Clc chloride channel"/>
    <property type="match status" value="1"/>
</dbReference>
<dbReference type="HAMAP" id="MF_01203">
    <property type="entry name" value="CLC_ClcB"/>
    <property type="match status" value="1"/>
</dbReference>
<dbReference type="InterPro" id="IPR014743">
    <property type="entry name" value="Cl-channel_core"/>
</dbReference>
<dbReference type="InterPro" id="IPR023790">
    <property type="entry name" value="Cl-channel_volt-gated_ClcB"/>
</dbReference>
<dbReference type="InterPro" id="IPR001807">
    <property type="entry name" value="ClC"/>
</dbReference>
<dbReference type="InterPro" id="IPR050368">
    <property type="entry name" value="ClC-type_chloride_channel"/>
</dbReference>
<dbReference type="NCBIfam" id="NF002437">
    <property type="entry name" value="PRK01610.1"/>
    <property type="match status" value="1"/>
</dbReference>
<dbReference type="PANTHER" id="PTHR43427">
    <property type="entry name" value="CHLORIDE CHANNEL PROTEIN CLC-E"/>
    <property type="match status" value="1"/>
</dbReference>
<dbReference type="PANTHER" id="PTHR43427:SF6">
    <property type="entry name" value="CHLORIDE CHANNEL PROTEIN CLC-E"/>
    <property type="match status" value="1"/>
</dbReference>
<dbReference type="Pfam" id="PF00654">
    <property type="entry name" value="Voltage_CLC"/>
    <property type="match status" value="1"/>
</dbReference>
<dbReference type="PRINTS" id="PR00762">
    <property type="entry name" value="CLCHANNEL"/>
</dbReference>
<dbReference type="SUPFAM" id="SSF81340">
    <property type="entry name" value="Clc chloride channel"/>
    <property type="match status" value="1"/>
</dbReference>
<feature type="chain" id="PRO_1000138684" description="Voltage-gated ClC-type chloride channel ClcB">
    <location>
        <begin position="1"/>
        <end position="418"/>
    </location>
</feature>
<feature type="transmembrane region" description="Helical" evidence="1">
    <location>
        <begin position="5"/>
        <end position="25"/>
    </location>
</feature>
<feature type="transmembrane region" description="Helical" evidence="1">
    <location>
        <begin position="54"/>
        <end position="74"/>
    </location>
</feature>
<feature type="transmembrane region" description="Helical" evidence="1">
    <location>
        <begin position="146"/>
        <end position="166"/>
    </location>
</feature>
<feature type="transmembrane region" description="Helical" evidence="1">
    <location>
        <begin position="168"/>
        <end position="188"/>
    </location>
</feature>
<feature type="transmembrane region" description="Helical" evidence="1">
    <location>
        <begin position="222"/>
        <end position="242"/>
    </location>
</feature>
<feature type="transmembrane region" description="Helical" evidence="1">
    <location>
        <begin position="258"/>
        <end position="278"/>
    </location>
</feature>
<feature type="transmembrane region" description="Helical" evidence="1">
    <location>
        <begin position="291"/>
        <end position="311"/>
    </location>
</feature>
<feature type="transmembrane region" description="Helical" evidence="1">
    <location>
        <begin position="316"/>
        <end position="336"/>
    </location>
</feature>
<feature type="transmembrane region" description="Helical" evidence="1">
    <location>
        <begin position="352"/>
        <end position="372"/>
    </location>
</feature>
<feature type="transmembrane region" description="Helical" evidence="1">
    <location>
        <begin position="380"/>
        <end position="400"/>
    </location>
</feature>
<gene>
    <name evidence="1" type="primary">clcB</name>
    <name type="ordered locus">ECUMN_1877</name>
</gene>
<sequence>MFRRLLIATVVGILAAFAVAGFRHAMLLLEWLFLNNDSGSLVNAATNLSPWRRLLTPALGGLAAGLLLMGWQKFTQQRPHAPTDYMEALQTDGQFDYAASLVKSLASLLVVTSGSAIGREGAMILLAALAASCFAQRFTPRQEWKLWIACGAAAGMAAAYRAPLAGSLFIAEVLFGTMMLASLGPVIISAVVALLVSNLINHSDALLYSVQLSVTVQARDYALIISTGVLAGLCGPLLLTLMNACHREFVSLKLAPPWQLALGGLIVGLLSLFTPAVWGNGYSTVQSFLTAPPLLMIIAGIFLCKLFAVLASSGSGAPGGVFTPTLFIGLAIGMLYGRSLGLWFPDGEEITLLLGLTGMATLLAATTHAPIMSTLMICEMTGEYQLLPGLLIACVIASVISRTLHRDSIYRQHTAKHS</sequence>
<organism>
    <name type="scientific">Escherichia coli O17:K52:H18 (strain UMN026 / ExPEC)</name>
    <dbReference type="NCBI Taxonomy" id="585056"/>
    <lineage>
        <taxon>Bacteria</taxon>
        <taxon>Pseudomonadati</taxon>
        <taxon>Pseudomonadota</taxon>
        <taxon>Gammaproteobacteria</taxon>
        <taxon>Enterobacterales</taxon>
        <taxon>Enterobacteriaceae</taxon>
        <taxon>Escherichia</taxon>
    </lineage>
</organism>
<evidence type="ECO:0000255" key="1">
    <source>
        <dbReference type="HAMAP-Rule" id="MF_01203"/>
    </source>
</evidence>